<name>RL28_SALDC</name>
<gene>
    <name evidence="1" type="primary">rpmB</name>
    <name type="ordered locus">SeD_A4115</name>
</gene>
<protein>
    <recommendedName>
        <fullName evidence="1">Large ribosomal subunit protein bL28</fullName>
    </recommendedName>
    <alternativeName>
        <fullName evidence="2">50S ribosomal protein L28</fullName>
    </alternativeName>
</protein>
<keyword id="KW-0687">Ribonucleoprotein</keyword>
<keyword id="KW-0689">Ribosomal protein</keyword>
<organism>
    <name type="scientific">Salmonella dublin (strain CT_02021853)</name>
    <dbReference type="NCBI Taxonomy" id="439851"/>
    <lineage>
        <taxon>Bacteria</taxon>
        <taxon>Pseudomonadati</taxon>
        <taxon>Pseudomonadota</taxon>
        <taxon>Gammaproteobacteria</taxon>
        <taxon>Enterobacterales</taxon>
        <taxon>Enterobacteriaceae</taxon>
        <taxon>Salmonella</taxon>
    </lineage>
</organism>
<reference key="1">
    <citation type="journal article" date="2011" name="J. Bacteriol.">
        <title>Comparative genomics of 28 Salmonella enterica isolates: evidence for CRISPR-mediated adaptive sublineage evolution.</title>
        <authorList>
            <person name="Fricke W.F."/>
            <person name="Mammel M.K."/>
            <person name="McDermott P.F."/>
            <person name="Tartera C."/>
            <person name="White D.G."/>
            <person name="Leclerc J.E."/>
            <person name="Ravel J."/>
            <person name="Cebula T.A."/>
        </authorList>
    </citation>
    <scope>NUCLEOTIDE SEQUENCE [LARGE SCALE GENOMIC DNA]</scope>
    <source>
        <strain>CT_02021853</strain>
    </source>
</reference>
<feature type="chain" id="PRO_1000121681" description="Large ribosomal subunit protein bL28">
    <location>
        <begin position="1"/>
        <end position="78"/>
    </location>
</feature>
<accession>B5FM61</accession>
<proteinExistence type="inferred from homology"/>
<evidence type="ECO:0000255" key="1">
    <source>
        <dbReference type="HAMAP-Rule" id="MF_00373"/>
    </source>
</evidence>
<evidence type="ECO:0000305" key="2"/>
<dbReference type="EMBL" id="CP001144">
    <property type="protein sequence ID" value="ACH73917.1"/>
    <property type="molecule type" value="Genomic_DNA"/>
</dbReference>
<dbReference type="RefSeq" id="WP_001519051.1">
    <property type="nucleotide sequence ID" value="NC_011205.1"/>
</dbReference>
<dbReference type="SMR" id="B5FM61"/>
<dbReference type="KEGG" id="sed:SeD_A4115"/>
<dbReference type="HOGENOM" id="CLU_064548_3_1_6"/>
<dbReference type="Proteomes" id="UP000008322">
    <property type="component" value="Chromosome"/>
</dbReference>
<dbReference type="GO" id="GO:0022625">
    <property type="term" value="C:cytosolic large ribosomal subunit"/>
    <property type="evidence" value="ECO:0007669"/>
    <property type="project" value="TreeGrafter"/>
</dbReference>
<dbReference type="GO" id="GO:0003735">
    <property type="term" value="F:structural constituent of ribosome"/>
    <property type="evidence" value="ECO:0007669"/>
    <property type="project" value="InterPro"/>
</dbReference>
<dbReference type="GO" id="GO:0006412">
    <property type="term" value="P:translation"/>
    <property type="evidence" value="ECO:0007669"/>
    <property type="project" value="UniProtKB-UniRule"/>
</dbReference>
<dbReference type="FunFam" id="2.30.170.40:FF:000001">
    <property type="entry name" value="50S ribosomal protein L28"/>
    <property type="match status" value="1"/>
</dbReference>
<dbReference type="Gene3D" id="2.30.170.40">
    <property type="entry name" value="Ribosomal protein L28/L24"/>
    <property type="match status" value="1"/>
</dbReference>
<dbReference type="HAMAP" id="MF_00373">
    <property type="entry name" value="Ribosomal_bL28"/>
    <property type="match status" value="1"/>
</dbReference>
<dbReference type="InterPro" id="IPR026569">
    <property type="entry name" value="Ribosomal_bL28"/>
</dbReference>
<dbReference type="InterPro" id="IPR034704">
    <property type="entry name" value="Ribosomal_bL28/bL31-like_sf"/>
</dbReference>
<dbReference type="InterPro" id="IPR001383">
    <property type="entry name" value="Ribosomal_bL28_bact-type"/>
</dbReference>
<dbReference type="InterPro" id="IPR037147">
    <property type="entry name" value="Ribosomal_bL28_sf"/>
</dbReference>
<dbReference type="NCBIfam" id="TIGR00009">
    <property type="entry name" value="L28"/>
    <property type="match status" value="1"/>
</dbReference>
<dbReference type="PANTHER" id="PTHR13528">
    <property type="entry name" value="39S RIBOSOMAL PROTEIN L28, MITOCHONDRIAL"/>
    <property type="match status" value="1"/>
</dbReference>
<dbReference type="PANTHER" id="PTHR13528:SF2">
    <property type="entry name" value="LARGE RIBOSOMAL SUBUNIT PROTEIN BL28M"/>
    <property type="match status" value="1"/>
</dbReference>
<dbReference type="Pfam" id="PF00830">
    <property type="entry name" value="Ribosomal_L28"/>
    <property type="match status" value="1"/>
</dbReference>
<dbReference type="SUPFAM" id="SSF143800">
    <property type="entry name" value="L28p-like"/>
    <property type="match status" value="1"/>
</dbReference>
<sequence length="78" mass="9051">MSRVCQVTGKRPVTGNNRSHALNATKRRFLPNLHSHRFWVESEKRFVTLRVSAKGMRIIDKKGIETVLSELRARGEKY</sequence>
<comment type="similarity">
    <text evidence="1">Belongs to the bacterial ribosomal protein bL28 family.</text>
</comment>